<feature type="chain" id="PRO_5000251384" description="UPF0756 membrane protein Lreu_0946">
    <location>
        <begin position="1"/>
        <end position="151"/>
    </location>
</feature>
<feature type="transmembrane region" description="Helical" evidence="1">
    <location>
        <begin position="4"/>
        <end position="24"/>
    </location>
</feature>
<feature type="transmembrane region" description="Helical" evidence="1">
    <location>
        <begin position="52"/>
        <end position="72"/>
    </location>
</feature>
<feature type="transmembrane region" description="Helical" evidence="1">
    <location>
        <begin position="77"/>
        <end position="97"/>
    </location>
</feature>
<feature type="transmembrane region" description="Helical" evidence="1">
    <location>
        <begin position="115"/>
        <end position="135"/>
    </location>
</feature>
<evidence type="ECO:0000255" key="1">
    <source>
        <dbReference type="HAMAP-Rule" id="MF_01874"/>
    </source>
</evidence>
<protein>
    <recommendedName>
        <fullName evidence="1">UPF0756 membrane protein Lreu_0946</fullName>
    </recommendedName>
</protein>
<comment type="subcellular location">
    <subcellularLocation>
        <location evidence="1">Cell membrane</location>
        <topology evidence="1">Multi-pass membrane protein</topology>
    </subcellularLocation>
</comment>
<comment type="similarity">
    <text evidence="1">Belongs to the UPF0756 family.</text>
</comment>
<keyword id="KW-1003">Cell membrane</keyword>
<keyword id="KW-0472">Membrane</keyword>
<keyword id="KW-1185">Reference proteome</keyword>
<keyword id="KW-0812">Transmembrane</keyword>
<keyword id="KW-1133">Transmembrane helix</keyword>
<reference key="1">
    <citation type="journal article" date="2011" name="PLoS Genet.">
        <title>The evolution of host specialization in the vertebrate gut symbiont Lactobacillus reuteri.</title>
        <authorList>
            <person name="Frese S.A."/>
            <person name="Benson A.K."/>
            <person name="Tannock G.W."/>
            <person name="Loach D.M."/>
            <person name="Kim J."/>
            <person name="Zhang M."/>
            <person name="Oh P.L."/>
            <person name="Heng N.C."/>
            <person name="Patil P.B."/>
            <person name="Juge N."/>
            <person name="Mackenzie D.A."/>
            <person name="Pearson B.M."/>
            <person name="Lapidus A."/>
            <person name="Dalin E."/>
            <person name="Tice H."/>
            <person name="Goltsman E."/>
            <person name="Land M."/>
            <person name="Hauser L."/>
            <person name="Ivanova N."/>
            <person name="Kyrpides N.C."/>
            <person name="Walter J."/>
        </authorList>
    </citation>
    <scope>NUCLEOTIDE SEQUENCE [LARGE SCALE GENOMIC DNA]</scope>
    <source>
        <strain>DSM 20016</strain>
    </source>
</reference>
<gene>
    <name type="ordered locus">Lreu_0946</name>
</gene>
<name>Y946_LIMRD</name>
<proteinExistence type="inferred from homology"/>
<organism>
    <name type="scientific">Limosilactobacillus reuteri (strain DSM 20016)</name>
    <name type="common">Lactobacillus reuteri</name>
    <dbReference type="NCBI Taxonomy" id="557436"/>
    <lineage>
        <taxon>Bacteria</taxon>
        <taxon>Bacillati</taxon>
        <taxon>Bacillota</taxon>
        <taxon>Bacilli</taxon>
        <taxon>Lactobacillales</taxon>
        <taxon>Lactobacillaceae</taxon>
        <taxon>Limosilactobacillus</taxon>
    </lineage>
</organism>
<dbReference type="EMBL" id="CP000705">
    <property type="protein sequence ID" value="ABQ83208.1"/>
    <property type="molecule type" value="Genomic_DNA"/>
</dbReference>
<dbReference type="RefSeq" id="WP_003667831.1">
    <property type="nucleotide sequence ID" value="NC_009513.1"/>
</dbReference>
<dbReference type="STRING" id="557436.Lreu_0946"/>
<dbReference type="KEGG" id="lre:Lreu_0946"/>
<dbReference type="PATRIC" id="fig|557436.17.peg.923"/>
<dbReference type="eggNOG" id="COG2707">
    <property type="taxonomic scope" value="Bacteria"/>
</dbReference>
<dbReference type="HOGENOM" id="CLU_125889_1_0_9"/>
<dbReference type="OMA" id="SPAGWIA"/>
<dbReference type="Proteomes" id="UP000001991">
    <property type="component" value="Chromosome"/>
</dbReference>
<dbReference type="GO" id="GO:0005886">
    <property type="term" value="C:plasma membrane"/>
    <property type="evidence" value="ECO:0007669"/>
    <property type="project" value="UniProtKB-SubCell"/>
</dbReference>
<dbReference type="HAMAP" id="MF_01874">
    <property type="entry name" value="UPF0756"/>
    <property type="match status" value="1"/>
</dbReference>
<dbReference type="InterPro" id="IPR007382">
    <property type="entry name" value="UPF0756_TM"/>
</dbReference>
<dbReference type="PANTHER" id="PTHR38452">
    <property type="entry name" value="UPF0756 MEMBRANE PROTEIN YEAL"/>
    <property type="match status" value="1"/>
</dbReference>
<dbReference type="PANTHER" id="PTHR38452:SF1">
    <property type="entry name" value="UPF0756 MEMBRANE PROTEIN YEAL"/>
    <property type="match status" value="1"/>
</dbReference>
<dbReference type="Pfam" id="PF04284">
    <property type="entry name" value="DUF441"/>
    <property type="match status" value="1"/>
</dbReference>
<accession>A5VK34</accession>
<sequence length="151" mass="15932">MESWLFLALVLLIAIFGHNSSLIIATVIVMVLKLIPYTAKWLPLIQHKGINWGVTVISVAILIPIATGQIGFNDLWAAFKTPAGWIAVGMGIAVAILSKYGVNQLAAVPQVTVALVLGTIIGVVAFKGIAAGPVIASGMTYCIVTLLNLHF</sequence>